<protein>
    <recommendedName>
        <fullName>Leucine-rich repeat-containing protein 55</fullName>
    </recommendedName>
    <alternativeName>
        <fullName>BK channel auxiliary gamma subunit LRRC55</fullName>
    </alternativeName>
</protein>
<name>LRC55_RAT</name>
<evidence type="ECO:0000250" key="1"/>
<evidence type="ECO:0000255" key="2"/>
<dbReference type="EMBL" id="BC099134">
    <property type="protein sequence ID" value="AAH99134.2"/>
    <property type="molecule type" value="mRNA"/>
</dbReference>
<dbReference type="RefSeq" id="NP_001116447.1">
    <property type="nucleotide sequence ID" value="NM_001122975.1"/>
</dbReference>
<dbReference type="RefSeq" id="XP_006234534.1">
    <property type="nucleotide sequence ID" value="XM_006234472.3"/>
</dbReference>
<dbReference type="RefSeq" id="XP_017447203.1">
    <property type="nucleotide sequence ID" value="XM_017591714.1"/>
</dbReference>
<dbReference type="SMR" id="Q4KLL3"/>
<dbReference type="FunCoup" id="Q4KLL3">
    <property type="interactions" value="14"/>
</dbReference>
<dbReference type="STRING" id="10116.ENSRNOP00000034072"/>
<dbReference type="PaxDb" id="10116-ENSRNOP00000034072"/>
<dbReference type="UCSC" id="RGD:1561726">
    <property type="organism name" value="rat"/>
</dbReference>
<dbReference type="AGR" id="RGD:1561726"/>
<dbReference type="RGD" id="1561726">
    <property type="gene designation" value="Lrrc55"/>
</dbReference>
<dbReference type="eggNOG" id="KOG0619">
    <property type="taxonomic scope" value="Eukaryota"/>
</dbReference>
<dbReference type="HOGENOM" id="CLU_000288_18_10_1"/>
<dbReference type="InParanoid" id="Q4KLL3"/>
<dbReference type="PhylomeDB" id="Q4KLL3"/>
<dbReference type="TreeFam" id="TF334689"/>
<dbReference type="PRO" id="PR:Q4KLL3"/>
<dbReference type="Proteomes" id="UP000002494">
    <property type="component" value="Unplaced"/>
</dbReference>
<dbReference type="GO" id="GO:0008076">
    <property type="term" value="C:voltage-gated potassium channel complex"/>
    <property type="evidence" value="ECO:0000266"/>
    <property type="project" value="RGD"/>
</dbReference>
<dbReference type="GO" id="GO:0099104">
    <property type="term" value="F:potassium channel activator activity"/>
    <property type="evidence" value="ECO:0000266"/>
    <property type="project" value="RGD"/>
</dbReference>
<dbReference type="GO" id="GO:0044325">
    <property type="term" value="F:transmembrane transporter binding"/>
    <property type="evidence" value="ECO:0000266"/>
    <property type="project" value="RGD"/>
</dbReference>
<dbReference type="GO" id="GO:0005249">
    <property type="term" value="F:voltage-gated potassium channel activity"/>
    <property type="evidence" value="ECO:0000266"/>
    <property type="project" value="RGD"/>
</dbReference>
<dbReference type="GO" id="GO:0071805">
    <property type="term" value="P:potassium ion transmembrane transport"/>
    <property type="evidence" value="ECO:0000266"/>
    <property type="project" value="RGD"/>
</dbReference>
<dbReference type="FunFam" id="3.80.10.10:FF:000245">
    <property type="entry name" value="Leucine rich repeat containing 55"/>
    <property type="match status" value="1"/>
</dbReference>
<dbReference type="FunFam" id="3.80.10.10:FF:000309">
    <property type="entry name" value="Leucine-rich repeat-containing protein 55"/>
    <property type="match status" value="1"/>
</dbReference>
<dbReference type="Gene3D" id="3.80.10.10">
    <property type="entry name" value="Ribonuclease Inhibitor"/>
    <property type="match status" value="2"/>
</dbReference>
<dbReference type="InterPro" id="IPR000483">
    <property type="entry name" value="Cys-rich_flank_reg_C"/>
</dbReference>
<dbReference type="InterPro" id="IPR051432">
    <property type="entry name" value="KCNMA1_auxiliary"/>
</dbReference>
<dbReference type="InterPro" id="IPR001611">
    <property type="entry name" value="Leu-rich_rpt"/>
</dbReference>
<dbReference type="InterPro" id="IPR003591">
    <property type="entry name" value="Leu-rich_rpt_typical-subtyp"/>
</dbReference>
<dbReference type="InterPro" id="IPR032675">
    <property type="entry name" value="LRR_dom_sf"/>
</dbReference>
<dbReference type="InterPro" id="IPR000372">
    <property type="entry name" value="LRRNT"/>
</dbReference>
<dbReference type="PANTHER" id="PTHR46473">
    <property type="entry name" value="GH08155P"/>
    <property type="match status" value="1"/>
</dbReference>
<dbReference type="PANTHER" id="PTHR46473:SF5">
    <property type="entry name" value="LEUCINE-RICH REPEAT-CONTAINING PROTEIN 55"/>
    <property type="match status" value="1"/>
</dbReference>
<dbReference type="Pfam" id="PF13855">
    <property type="entry name" value="LRR_8"/>
    <property type="match status" value="1"/>
</dbReference>
<dbReference type="SMART" id="SM00369">
    <property type="entry name" value="LRR_TYP"/>
    <property type="match status" value="4"/>
</dbReference>
<dbReference type="SMART" id="SM00082">
    <property type="entry name" value="LRRCT"/>
    <property type="match status" value="1"/>
</dbReference>
<dbReference type="SMART" id="SM00013">
    <property type="entry name" value="LRRNT"/>
    <property type="match status" value="1"/>
</dbReference>
<dbReference type="SUPFAM" id="SSF52058">
    <property type="entry name" value="L domain-like"/>
    <property type="match status" value="1"/>
</dbReference>
<dbReference type="PROSITE" id="PS51450">
    <property type="entry name" value="LRR"/>
    <property type="match status" value="5"/>
</dbReference>
<comment type="function">
    <text evidence="1">Auxiliary protein of the large-conductance, voltage and calcium-activated potassium channel (BK alpha). Modulates gating properties by producing a marked shift in the BK channel's voltage dependence of activation in the hyperpolarizing direction, and in the absence of calcium (By similarity).</text>
</comment>
<comment type="subunit">
    <text evidence="1">Interacts with KCNMA1.</text>
</comment>
<comment type="subcellular location">
    <subcellularLocation>
        <location evidence="1">Cell membrane</location>
        <topology evidence="1">Single-pass membrane protein</topology>
    </subcellularLocation>
</comment>
<comment type="domain">
    <text evidence="1">The transmembrane domain is necessary for interaction with KCNMA1.</text>
</comment>
<gene>
    <name type="primary">Lrrc55</name>
</gene>
<feature type="signal peptide" evidence="1">
    <location>
        <begin position="1"/>
        <end position="34"/>
    </location>
</feature>
<feature type="chain" id="PRO_0000232915" description="Leucine-rich repeat-containing protein 55">
    <location>
        <begin position="35"/>
        <end position="298"/>
    </location>
</feature>
<feature type="transmembrane region" description="Helical" evidence="2">
    <location>
        <begin position="259"/>
        <end position="279"/>
    </location>
</feature>
<feature type="domain" description="LRRNT">
    <location>
        <begin position="35"/>
        <end position="65"/>
    </location>
</feature>
<feature type="repeat" description="LRR 1">
    <location>
        <begin position="66"/>
        <end position="87"/>
    </location>
</feature>
<feature type="repeat" description="LRR 2">
    <location>
        <begin position="90"/>
        <end position="111"/>
    </location>
</feature>
<feature type="repeat" description="LRR 3">
    <location>
        <begin position="114"/>
        <end position="135"/>
    </location>
</feature>
<feature type="repeat" description="LRR 4">
    <location>
        <begin position="138"/>
        <end position="160"/>
    </location>
</feature>
<feature type="repeat" description="LRR 5">
    <location>
        <begin position="163"/>
        <end position="186"/>
    </location>
</feature>
<feature type="domain" description="LRRCT">
    <location>
        <begin position="196"/>
        <end position="251"/>
    </location>
</feature>
<feature type="disulfide bond" evidence="2">
    <location>
        <begin position="38"/>
        <end position="44"/>
    </location>
</feature>
<feature type="disulfide bond" evidence="2">
    <location>
        <begin position="42"/>
        <end position="51"/>
    </location>
</feature>
<feature type="disulfide bond" evidence="2">
    <location>
        <begin position="200"/>
        <end position="227"/>
    </location>
</feature>
<feature type="disulfide bond" evidence="2">
    <location>
        <begin position="202"/>
        <end position="249"/>
    </location>
</feature>
<reference key="1">
    <citation type="journal article" date="2004" name="Genome Res.">
        <title>The status, quality, and expansion of the NIH full-length cDNA project: the Mammalian Gene Collection (MGC).</title>
        <authorList>
            <consortium name="The MGC Project Team"/>
        </authorList>
    </citation>
    <scope>NUCLEOTIDE SEQUENCE [LARGE SCALE MRNA]</scope>
    <source>
        <tissue>Testis</tissue>
    </source>
</reference>
<organism>
    <name type="scientific">Rattus norvegicus</name>
    <name type="common">Rat</name>
    <dbReference type="NCBI Taxonomy" id="10116"/>
    <lineage>
        <taxon>Eukaryota</taxon>
        <taxon>Metazoa</taxon>
        <taxon>Chordata</taxon>
        <taxon>Craniata</taxon>
        <taxon>Vertebrata</taxon>
        <taxon>Euteleostomi</taxon>
        <taxon>Mammalia</taxon>
        <taxon>Eutheria</taxon>
        <taxon>Euarchontoglires</taxon>
        <taxon>Glires</taxon>
        <taxon>Rodentia</taxon>
        <taxon>Myomorpha</taxon>
        <taxon>Muroidea</taxon>
        <taxon>Muridae</taxon>
        <taxon>Murinae</taxon>
        <taxon>Rattus</taxon>
    </lineage>
</organism>
<sequence length="298" mass="33000">MGDTWAQLPWPGPPHSALLLVFFLLAAGVMHSDAGASCPVLCTCRNQVVDCSNQRLFSVPPDLPMDTRNLSLAHNRIAAVPPGYLTCYMELRVLDLRNNSLMELPPGLFLHAKRLAHLDLSYNNLSHVPADMFREAHGLVHIDLSHNPWLRRVHPQAFQGLVHLRDLDLSYGGLAFLSLEALEGLPGLVTLQIGGNPWVCGCTMEPLLKWLRNRIQRCTADSQLAECRGPPEVEGAPLFSLTEESFKACHLTLTLDDYLFIAFVGFVVSIASVATNFLLGITANCCHRWSKANEEEEI</sequence>
<accession>Q4KLL3</accession>
<proteinExistence type="evidence at transcript level"/>
<keyword id="KW-1003">Cell membrane</keyword>
<keyword id="KW-1015">Disulfide bond</keyword>
<keyword id="KW-0407">Ion channel</keyword>
<keyword id="KW-0406">Ion transport</keyword>
<keyword id="KW-0433">Leucine-rich repeat</keyword>
<keyword id="KW-0472">Membrane</keyword>
<keyword id="KW-1185">Reference proteome</keyword>
<keyword id="KW-0677">Repeat</keyword>
<keyword id="KW-0732">Signal</keyword>
<keyword id="KW-0812">Transmembrane</keyword>
<keyword id="KW-1133">Transmembrane helix</keyword>
<keyword id="KW-0813">Transport</keyword>